<keyword id="KW-0021">Allosteric enzyme</keyword>
<keyword id="KW-0963">Cytoplasm</keyword>
<keyword id="KW-0378">Hydrolase</keyword>
<keyword id="KW-0479">Metal-binding</keyword>
<keyword id="KW-0645">Protease</keyword>
<keyword id="KW-0915">Sodium</keyword>
<keyword id="KW-0888">Threonine protease</keyword>
<comment type="function">
    <text evidence="1">Protease subunit of a proteasome-like degradation complex believed to be a general protein degrading machinery.</text>
</comment>
<comment type="catalytic activity">
    <reaction evidence="1">
        <text>ATP-dependent cleavage of peptide bonds with broad specificity.</text>
        <dbReference type="EC" id="3.4.25.2"/>
    </reaction>
</comment>
<comment type="activity regulation">
    <text evidence="1">Allosterically activated by HslU binding.</text>
</comment>
<comment type="subunit">
    <text evidence="1">A double ring-shaped homohexamer of HslV is capped on each side by a ring-shaped HslU homohexamer. The assembly of the HslU/HslV complex is dependent on binding of ATP.</text>
</comment>
<comment type="subcellular location">
    <subcellularLocation>
        <location evidence="1">Cytoplasm</location>
    </subcellularLocation>
</comment>
<comment type="similarity">
    <text evidence="1">Belongs to the peptidase T1B family. HslV subfamily.</text>
</comment>
<reference key="1">
    <citation type="journal article" date="2006" name="J. Bacteriol.">
        <title>Pathogenomic sequence analysis of Bacillus cereus and Bacillus thuringiensis isolates closely related to Bacillus anthracis.</title>
        <authorList>
            <person name="Han C.S."/>
            <person name="Xie G."/>
            <person name="Challacombe J.F."/>
            <person name="Altherr M.R."/>
            <person name="Bhotika S.S."/>
            <person name="Bruce D."/>
            <person name="Campbell C.S."/>
            <person name="Campbell M.L."/>
            <person name="Chen J."/>
            <person name="Chertkov O."/>
            <person name="Cleland C."/>
            <person name="Dimitrijevic M."/>
            <person name="Doggett N.A."/>
            <person name="Fawcett J.J."/>
            <person name="Glavina T."/>
            <person name="Goodwin L.A."/>
            <person name="Hill K.K."/>
            <person name="Hitchcock P."/>
            <person name="Jackson P.J."/>
            <person name="Keim P."/>
            <person name="Kewalramani A.R."/>
            <person name="Longmire J."/>
            <person name="Lucas S."/>
            <person name="Malfatti S."/>
            <person name="McMurry K."/>
            <person name="Meincke L.J."/>
            <person name="Misra M."/>
            <person name="Moseman B.L."/>
            <person name="Mundt M."/>
            <person name="Munk A.C."/>
            <person name="Okinaka R.T."/>
            <person name="Parson-Quintana B."/>
            <person name="Reilly L.P."/>
            <person name="Richardson P."/>
            <person name="Robinson D.L."/>
            <person name="Rubin E."/>
            <person name="Saunders E."/>
            <person name="Tapia R."/>
            <person name="Tesmer J.G."/>
            <person name="Thayer N."/>
            <person name="Thompson L.S."/>
            <person name="Tice H."/>
            <person name="Ticknor L.O."/>
            <person name="Wills P.L."/>
            <person name="Brettin T.S."/>
            <person name="Gilna P."/>
        </authorList>
    </citation>
    <scope>NUCLEOTIDE SEQUENCE [LARGE SCALE GENOMIC DNA]</scope>
    <source>
        <strain>97-27</strain>
    </source>
</reference>
<accession>Q6HEY5</accession>
<dbReference type="EC" id="3.4.25.2" evidence="1"/>
<dbReference type="EMBL" id="AE017355">
    <property type="protein sequence ID" value="AAT61617.1"/>
    <property type="molecule type" value="Genomic_DNA"/>
</dbReference>
<dbReference type="RefSeq" id="WP_000526272.1">
    <property type="nucleotide sequence ID" value="NC_005957.1"/>
</dbReference>
<dbReference type="RefSeq" id="YP_037891.1">
    <property type="nucleotide sequence ID" value="NC_005957.1"/>
</dbReference>
<dbReference type="SMR" id="Q6HEY5"/>
<dbReference type="MEROPS" id="T01.007"/>
<dbReference type="GeneID" id="45023658"/>
<dbReference type="KEGG" id="btk:BT9727_3571"/>
<dbReference type="PATRIC" id="fig|281309.8.peg.3809"/>
<dbReference type="HOGENOM" id="CLU_093872_1_0_9"/>
<dbReference type="Proteomes" id="UP000001301">
    <property type="component" value="Chromosome"/>
</dbReference>
<dbReference type="GO" id="GO:0009376">
    <property type="term" value="C:HslUV protease complex"/>
    <property type="evidence" value="ECO:0007669"/>
    <property type="project" value="UniProtKB-UniRule"/>
</dbReference>
<dbReference type="GO" id="GO:0005839">
    <property type="term" value="C:proteasome core complex"/>
    <property type="evidence" value="ECO:0007669"/>
    <property type="project" value="InterPro"/>
</dbReference>
<dbReference type="GO" id="GO:0046872">
    <property type="term" value="F:metal ion binding"/>
    <property type="evidence" value="ECO:0007669"/>
    <property type="project" value="UniProtKB-KW"/>
</dbReference>
<dbReference type="GO" id="GO:0004298">
    <property type="term" value="F:threonine-type endopeptidase activity"/>
    <property type="evidence" value="ECO:0007669"/>
    <property type="project" value="UniProtKB-KW"/>
</dbReference>
<dbReference type="GO" id="GO:0051603">
    <property type="term" value="P:proteolysis involved in protein catabolic process"/>
    <property type="evidence" value="ECO:0007669"/>
    <property type="project" value="InterPro"/>
</dbReference>
<dbReference type="CDD" id="cd01913">
    <property type="entry name" value="protease_HslV"/>
    <property type="match status" value="1"/>
</dbReference>
<dbReference type="Gene3D" id="3.60.20.10">
    <property type="entry name" value="Glutamine Phosphoribosylpyrophosphate, subunit 1, domain 1"/>
    <property type="match status" value="1"/>
</dbReference>
<dbReference type="HAMAP" id="MF_00248">
    <property type="entry name" value="HslV"/>
    <property type="match status" value="1"/>
</dbReference>
<dbReference type="InterPro" id="IPR022281">
    <property type="entry name" value="ATP-dep_Prtase_HsIV_su"/>
</dbReference>
<dbReference type="InterPro" id="IPR029055">
    <property type="entry name" value="Ntn_hydrolases_N"/>
</dbReference>
<dbReference type="InterPro" id="IPR001353">
    <property type="entry name" value="Proteasome_sua/b"/>
</dbReference>
<dbReference type="InterPro" id="IPR023333">
    <property type="entry name" value="Proteasome_suB-type"/>
</dbReference>
<dbReference type="NCBIfam" id="TIGR03692">
    <property type="entry name" value="ATP_dep_HslV"/>
    <property type="match status" value="1"/>
</dbReference>
<dbReference type="NCBIfam" id="NF003964">
    <property type="entry name" value="PRK05456.1"/>
    <property type="match status" value="1"/>
</dbReference>
<dbReference type="PANTHER" id="PTHR32194:SF0">
    <property type="entry name" value="ATP-DEPENDENT PROTEASE SUBUNIT HSLV"/>
    <property type="match status" value="1"/>
</dbReference>
<dbReference type="PANTHER" id="PTHR32194">
    <property type="entry name" value="METALLOPROTEASE TLDD"/>
    <property type="match status" value="1"/>
</dbReference>
<dbReference type="Pfam" id="PF00227">
    <property type="entry name" value="Proteasome"/>
    <property type="match status" value="1"/>
</dbReference>
<dbReference type="PIRSF" id="PIRSF039093">
    <property type="entry name" value="HslV"/>
    <property type="match status" value="1"/>
</dbReference>
<dbReference type="SUPFAM" id="SSF56235">
    <property type="entry name" value="N-terminal nucleophile aminohydrolases (Ntn hydrolases)"/>
    <property type="match status" value="1"/>
</dbReference>
<dbReference type="PROSITE" id="PS51476">
    <property type="entry name" value="PROTEASOME_BETA_2"/>
    <property type="match status" value="1"/>
</dbReference>
<proteinExistence type="inferred from homology"/>
<evidence type="ECO:0000255" key="1">
    <source>
        <dbReference type="HAMAP-Rule" id="MF_00248"/>
    </source>
</evidence>
<feature type="chain" id="PRO_0000148082" description="ATP-dependent protease subunit HslV">
    <location>
        <begin position="1"/>
        <end position="180"/>
    </location>
</feature>
<feature type="active site" evidence="1">
    <location>
        <position position="7"/>
    </location>
</feature>
<feature type="binding site" evidence="1">
    <location>
        <position position="165"/>
    </location>
    <ligand>
        <name>Na(+)</name>
        <dbReference type="ChEBI" id="CHEBI:29101"/>
    </ligand>
</feature>
<feature type="binding site" evidence="1">
    <location>
        <position position="168"/>
    </location>
    <ligand>
        <name>Na(+)</name>
        <dbReference type="ChEBI" id="CHEBI:29101"/>
    </ligand>
</feature>
<feature type="binding site" evidence="1">
    <location>
        <position position="171"/>
    </location>
    <ligand>
        <name>Na(+)</name>
        <dbReference type="ChEBI" id="CHEBI:29101"/>
    </ligand>
</feature>
<gene>
    <name evidence="1" type="primary">hslV</name>
    <name type="ordered locus">BT9727_3571</name>
</gene>
<sequence length="180" mass="19449">MGNFHATTIFAVHHNGECAMAGDGQVTMGNAVVMKHTARKVRKLFQGKVLAGFAGSVADAFTLFEMFEGKLEEYNGNLQRAAVEMAKQWRGDKMLRQLEAMLIVMDKTTMLLVSGTGEVIEPDDGILAIGSGGNYALSAGRALKQYASEHLTAKQIAKASLEIAGDICVYTNHNIIVEEL</sequence>
<name>HSLV_BACHK</name>
<protein>
    <recommendedName>
        <fullName evidence="1">ATP-dependent protease subunit HslV</fullName>
        <ecNumber evidence="1">3.4.25.2</ecNumber>
    </recommendedName>
</protein>
<organism>
    <name type="scientific">Bacillus thuringiensis subsp. konkukian (strain 97-27)</name>
    <dbReference type="NCBI Taxonomy" id="281309"/>
    <lineage>
        <taxon>Bacteria</taxon>
        <taxon>Bacillati</taxon>
        <taxon>Bacillota</taxon>
        <taxon>Bacilli</taxon>
        <taxon>Bacillales</taxon>
        <taxon>Bacillaceae</taxon>
        <taxon>Bacillus</taxon>
        <taxon>Bacillus cereus group</taxon>
    </lineage>
</organism>